<organism>
    <name type="scientific">Coccidioides immitis (strain RS)</name>
    <name type="common">Valley fever fungus</name>
    <dbReference type="NCBI Taxonomy" id="246410"/>
    <lineage>
        <taxon>Eukaryota</taxon>
        <taxon>Fungi</taxon>
        <taxon>Dikarya</taxon>
        <taxon>Ascomycota</taxon>
        <taxon>Pezizomycotina</taxon>
        <taxon>Eurotiomycetes</taxon>
        <taxon>Eurotiomycetidae</taxon>
        <taxon>Onygenales</taxon>
        <taxon>Onygenaceae</taxon>
        <taxon>Coccidioides</taxon>
    </lineage>
</organism>
<gene>
    <name type="primary">FES1</name>
    <name type="ORF">CIMG_02789</name>
</gene>
<evidence type="ECO:0000250" key="1"/>
<evidence type="ECO:0000305" key="2"/>
<proteinExistence type="inferred from homology"/>
<sequence length="212" mass="23665">MDSHMNNLLKWSIENSVPAQPDDPEQVKQERSLDRLDTQALQRLLSNAPSDADLMKAAMEVVSDDFATLENKLIAFDNFEQLIENLDNANNMGVLGLWTPLVEALSDAEPQMRKMAAWCIGTAVQNNEMAQNKLLDFKAVPKLLSLAKTDPDTTVRRKAIYALSSAVRNHQPSLDELQKLLPADYVSEGEKMNAADMDRIDAIMNKLKEIPA</sequence>
<dbReference type="EMBL" id="GG704911">
    <property type="protein sequence ID" value="EAS37435.3"/>
    <property type="molecule type" value="Genomic_DNA"/>
</dbReference>
<dbReference type="RefSeq" id="XP_001249018.2">
    <property type="nucleotide sequence ID" value="XM_001249017.2"/>
</dbReference>
<dbReference type="SMR" id="Q1E3S4"/>
<dbReference type="FunCoup" id="Q1E3S4">
    <property type="interactions" value="196"/>
</dbReference>
<dbReference type="STRING" id="246410.Q1E3S4"/>
<dbReference type="GeneID" id="4566529"/>
<dbReference type="KEGG" id="cim:CIMG_02789"/>
<dbReference type="VEuPathDB" id="FungiDB:CIMG_02789"/>
<dbReference type="InParanoid" id="Q1E3S4"/>
<dbReference type="OMA" id="LKWSVEN"/>
<dbReference type="OrthoDB" id="10250458at2759"/>
<dbReference type="Proteomes" id="UP000001261">
    <property type="component" value="Unassembled WGS sequence"/>
</dbReference>
<dbReference type="GO" id="GO:0005783">
    <property type="term" value="C:endoplasmic reticulum"/>
    <property type="evidence" value="ECO:0007669"/>
    <property type="project" value="TreeGrafter"/>
</dbReference>
<dbReference type="GO" id="GO:0000774">
    <property type="term" value="F:adenyl-nucleotide exchange factor activity"/>
    <property type="evidence" value="ECO:0007669"/>
    <property type="project" value="TreeGrafter"/>
</dbReference>
<dbReference type="GO" id="GO:0006417">
    <property type="term" value="P:regulation of translation"/>
    <property type="evidence" value="ECO:0007669"/>
    <property type="project" value="UniProtKB-KW"/>
</dbReference>
<dbReference type="FunFam" id="1.25.10.10:FF:000434">
    <property type="entry name" value="Hsp70 nucleotide exchange factor fes1"/>
    <property type="match status" value="1"/>
</dbReference>
<dbReference type="Gene3D" id="1.25.10.10">
    <property type="entry name" value="Leucine-rich Repeat Variant"/>
    <property type="match status" value="1"/>
</dbReference>
<dbReference type="InterPro" id="IPR011989">
    <property type="entry name" value="ARM-like"/>
</dbReference>
<dbReference type="InterPro" id="IPR016024">
    <property type="entry name" value="ARM-type_fold"/>
</dbReference>
<dbReference type="InterPro" id="IPR050693">
    <property type="entry name" value="Hsp70_NEF-Inhibitors"/>
</dbReference>
<dbReference type="InterPro" id="IPR013918">
    <property type="entry name" value="Nucleotide_exch_fac_Fes1"/>
</dbReference>
<dbReference type="PANTHER" id="PTHR19316:SF18">
    <property type="entry name" value="HSP70-BINDING PROTEIN 1"/>
    <property type="match status" value="1"/>
</dbReference>
<dbReference type="PANTHER" id="PTHR19316">
    <property type="entry name" value="PROTEIN FOLDING REGULATOR"/>
    <property type="match status" value="1"/>
</dbReference>
<dbReference type="Pfam" id="PF08609">
    <property type="entry name" value="Fes1"/>
    <property type="match status" value="1"/>
</dbReference>
<dbReference type="Pfam" id="PF13646">
    <property type="entry name" value="HEAT_2"/>
    <property type="match status" value="1"/>
</dbReference>
<dbReference type="SUPFAM" id="SSF48371">
    <property type="entry name" value="ARM repeat"/>
    <property type="match status" value="1"/>
</dbReference>
<comment type="function">
    <text evidence="1">Functions as a nucleotide exchange factor (NEF) for Hsp70 chaperones which accelerates the release of ADP. Required for fully efficient Hsp70-mediated folding of proteins (By similarity).</text>
</comment>
<comment type="subcellular location">
    <subcellularLocation>
        <location evidence="1">Cytoplasm</location>
    </subcellularLocation>
</comment>
<comment type="similarity">
    <text evidence="2">Belongs to the FES1 family.</text>
</comment>
<accession>Q1E3S4</accession>
<accession>I9XID8</accession>
<feature type="chain" id="PRO_0000285391" description="Hsp70 nucleotide exchange factor FES1">
    <location>
        <begin position="1"/>
        <end position="212"/>
    </location>
</feature>
<feature type="repeat" description="ARM 1">
    <location>
        <begin position="26"/>
        <end position="67"/>
    </location>
</feature>
<feature type="repeat" description="ARM 2">
    <location>
        <begin position="86"/>
        <end position="125"/>
    </location>
</feature>
<feature type="repeat" description="ARM 3">
    <location>
        <begin position="128"/>
        <end position="168"/>
    </location>
</feature>
<protein>
    <recommendedName>
        <fullName>Hsp70 nucleotide exchange factor FES1</fullName>
    </recommendedName>
</protein>
<name>FES1_COCIM</name>
<reference key="1">
    <citation type="journal article" date="2009" name="Genome Res.">
        <title>Comparative genomic analyses of the human fungal pathogens Coccidioides and their relatives.</title>
        <authorList>
            <person name="Sharpton T.J."/>
            <person name="Stajich J.E."/>
            <person name="Rounsley S.D."/>
            <person name="Gardner M.J."/>
            <person name="Wortman J.R."/>
            <person name="Jordar V.S."/>
            <person name="Maiti R."/>
            <person name="Kodira C.D."/>
            <person name="Neafsey D.E."/>
            <person name="Zeng Q."/>
            <person name="Hung C.-Y."/>
            <person name="McMahan C."/>
            <person name="Muszewska A."/>
            <person name="Grynberg M."/>
            <person name="Mandel M.A."/>
            <person name="Kellner E.M."/>
            <person name="Barker B.M."/>
            <person name="Galgiani J.N."/>
            <person name="Orbach M.J."/>
            <person name="Kirkland T.N."/>
            <person name="Cole G.T."/>
            <person name="Henn M.R."/>
            <person name="Birren B.W."/>
            <person name="Taylor J.W."/>
        </authorList>
    </citation>
    <scope>NUCLEOTIDE SEQUENCE [LARGE SCALE GENOMIC DNA]</scope>
    <source>
        <strain>RS</strain>
    </source>
</reference>
<reference key="2">
    <citation type="journal article" date="2010" name="Genome Res.">
        <title>Population genomic sequencing of Coccidioides fungi reveals recent hybridization and transposon control.</title>
        <authorList>
            <person name="Neafsey D.E."/>
            <person name="Barker B.M."/>
            <person name="Sharpton T.J."/>
            <person name="Stajich J.E."/>
            <person name="Park D.J."/>
            <person name="Whiston E."/>
            <person name="Hung C.-Y."/>
            <person name="McMahan C."/>
            <person name="White J."/>
            <person name="Sykes S."/>
            <person name="Heiman D."/>
            <person name="Young S."/>
            <person name="Zeng Q."/>
            <person name="Abouelleil A."/>
            <person name="Aftuck L."/>
            <person name="Bessette D."/>
            <person name="Brown A."/>
            <person name="FitzGerald M."/>
            <person name="Lui A."/>
            <person name="Macdonald J.P."/>
            <person name="Priest M."/>
            <person name="Orbach M.J."/>
            <person name="Galgiani J.N."/>
            <person name="Kirkland T.N."/>
            <person name="Cole G.T."/>
            <person name="Birren B.W."/>
            <person name="Henn M.R."/>
            <person name="Taylor J.W."/>
            <person name="Rounsley S.D."/>
        </authorList>
    </citation>
    <scope>GENOME REANNOTATION</scope>
    <source>
        <strain>RS</strain>
    </source>
</reference>
<keyword id="KW-0963">Cytoplasm</keyword>
<keyword id="KW-1185">Reference proteome</keyword>
<keyword id="KW-0677">Repeat</keyword>
<keyword id="KW-0810">Translation regulation</keyword>